<name>NADD_CYTH3</name>
<keyword id="KW-0067">ATP-binding</keyword>
<keyword id="KW-0520">NAD</keyword>
<keyword id="KW-0547">Nucleotide-binding</keyword>
<keyword id="KW-0548">Nucleotidyltransferase</keyword>
<keyword id="KW-0662">Pyridine nucleotide biosynthesis</keyword>
<keyword id="KW-1185">Reference proteome</keyword>
<keyword id="KW-0808">Transferase</keyword>
<accession>Q11XI1</accession>
<feature type="chain" id="PRO_0000336685" description="Probable nicotinate-nucleotide adenylyltransferase">
    <location>
        <begin position="1"/>
        <end position="192"/>
    </location>
</feature>
<proteinExistence type="inferred from homology"/>
<gene>
    <name evidence="1" type="primary">nadD</name>
    <name type="ordered locus">CHU_0598</name>
</gene>
<comment type="function">
    <text evidence="1">Catalyzes the reversible adenylation of nicotinate mononucleotide (NaMN) to nicotinic acid adenine dinucleotide (NaAD).</text>
</comment>
<comment type="catalytic activity">
    <reaction evidence="1">
        <text>nicotinate beta-D-ribonucleotide + ATP + H(+) = deamido-NAD(+) + diphosphate</text>
        <dbReference type="Rhea" id="RHEA:22860"/>
        <dbReference type="ChEBI" id="CHEBI:15378"/>
        <dbReference type="ChEBI" id="CHEBI:30616"/>
        <dbReference type="ChEBI" id="CHEBI:33019"/>
        <dbReference type="ChEBI" id="CHEBI:57502"/>
        <dbReference type="ChEBI" id="CHEBI:58437"/>
        <dbReference type="EC" id="2.7.7.18"/>
    </reaction>
</comment>
<comment type="pathway">
    <text evidence="1">Cofactor biosynthesis; NAD(+) biosynthesis; deamido-NAD(+) from nicotinate D-ribonucleotide: step 1/1.</text>
</comment>
<comment type="similarity">
    <text evidence="1">Belongs to the NadD family.</text>
</comment>
<sequence>MKIGLFFGSFNPIHVGHLIIGNTMAETTDLDEVWYVVSPQNPFKKNQSLLHEFDRFDMVTAAIANNPKFRASDIEFSLPKPSYTVDTLTYISDKYPQHSFVLIIGEDNLDQFTNWKNHEQILHHYSLYVYPRPDSSNSFLREHKNVRLVAAPLLEISATYIRNLVKQEKSIRYLVSKEVEELILSRKYYSNY</sequence>
<protein>
    <recommendedName>
        <fullName evidence="1">Probable nicotinate-nucleotide adenylyltransferase</fullName>
        <ecNumber evidence="1">2.7.7.18</ecNumber>
    </recommendedName>
    <alternativeName>
        <fullName evidence="1">Deamido-NAD(+) diphosphorylase</fullName>
    </alternativeName>
    <alternativeName>
        <fullName evidence="1">Deamido-NAD(+) pyrophosphorylase</fullName>
    </alternativeName>
    <alternativeName>
        <fullName evidence="1">Nicotinate mononucleotide adenylyltransferase</fullName>
        <shortName evidence="1">NaMN adenylyltransferase</shortName>
    </alternativeName>
</protein>
<evidence type="ECO:0000255" key="1">
    <source>
        <dbReference type="HAMAP-Rule" id="MF_00244"/>
    </source>
</evidence>
<reference key="1">
    <citation type="journal article" date="2007" name="Appl. Environ. Microbiol.">
        <title>Genome sequence of the cellulolytic gliding bacterium Cytophaga hutchinsonii.</title>
        <authorList>
            <person name="Xie G."/>
            <person name="Bruce D.C."/>
            <person name="Challacombe J.F."/>
            <person name="Chertkov O."/>
            <person name="Detter J.C."/>
            <person name="Gilna P."/>
            <person name="Han C.S."/>
            <person name="Lucas S."/>
            <person name="Misra M."/>
            <person name="Myers G.L."/>
            <person name="Richardson P."/>
            <person name="Tapia R."/>
            <person name="Thayer N."/>
            <person name="Thompson L.S."/>
            <person name="Brettin T.S."/>
            <person name="Henrissat B."/>
            <person name="Wilson D.B."/>
            <person name="McBride M.J."/>
        </authorList>
    </citation>
    <scope>NUCLEOTIDE SEQUENCE [LARGE SCALE GENOMIC DNA]</scope>
    <source>
        <strain>ATCC 33406 / DSM 1761 / JCM 20678 / CIP 103989 / IAM 12607 / NBRC 15051 / NCIMB 9469 / D465</strain>
    </source>
</reference>
<organism>
    <name type="scientific">Cytophaga hutchinsonii (strain ATCC 33406 / DSM 1761 / CIP 103989 / NBRC 15051 / NCIMB 9469 / D465)</name>
    <dbReference type="NCBI Taxonomy" id="269798"/>
    <lineage>
        <taxon>Bacteria</taxon>
        <taxon>Pseudomonadati</taxon>
        <taxon>Bacteroidota</taxon>
        <taxon>Cytophagia</taxon>
        <taxon>Cytophagales</taxon>
        <taxon>Cytophagaceae</taxon>
        <taxon>Cytophaga</taxon>
    </lineage>
</organism>
<dbReference type="EC" id="2.7.7.18" evidence="1"/>
<dbReference type="EMBL" id="CP000383">
    <property type="protein sequence ID" value="ABG57885.1"/>
    <property type="molecule type" value="Genomic_DNA"/>
</dbReference>
<dbReference type="RefSeq" id="WP_011584001.1">
    <property type="nucleotide sequence ID" value="NC_008255.1"/>
</dbReference>
<dbReference type="SMR" id="Q11XI1"/>
<dbReference type="STRING" id="269798.CHU_0598"/>
<dbReference type="KEGG" id="chu:CHU_0598"/>
<dbReference type="eggNOG" id="COG1057">
    <property type="taxonomic scope" value="Bacteria"/>
</dbReference>
<dbReference type="HOGENOM" id="CLU_069765_3_3_10"/>
<dbReference type="OrthoDB" id="5295945at2"/>
<dbReference type="UniPathway" id="UPA00253">
    <property type="reaction ID" value="UER00332"/>
</dbReference>
<dbReference type="Proteomes" id="UP000001822">
    <property type="component" value="Chromosome"/>
</dbReference>
<dbReference type="GO" id="GO:0005524">
    <property type="term" value="F:ATP binding"/>
    <property type="evidence" value="ECO:0007669"/>
    <property type="project" value="UniProtKB-KW"/>
</dbReference>
<dbReference type="GO" id="GO:0004515">
    <property type="term" value="F:nicotinate-nucleotide adenylyltransferase activity"/>
    <property type="evidence" value="ECO:0007669"/>
    <property type="project" value="UniProtKB-UniRule"/>
</dbReference>
<dbReference type="GO" id="GO:0009435">
    <property type="term" value="P:NAD biosynthetic process"/>
    <property type="evidence" value="ECO:0007669"/>
    <property type="project" value="UniProtKB-UniRule"/>
</dbReference>
<dbReference type="CDD" id="cd02165">
    <property type="entry name" value="NMNAT"/>
    <property type="match status" value="1"/>
</dbReference>
<dbReference type="Gene3D" id="3.40.50.620">
    <property type="entry name" value="HUPs"/>
    <property type="match status" value="1"/>
</dbReference>
<dbReference type="HAMAP" id="MF_00244">
    <property type="entry name" value="NaMN_adenylyltr"/>
    <property type="match status" value="1"/>
</dbReference>
<dbReference type="InterPro" id="IPR004821">
    <property type="entry name" value="Cyt_trans-like"/>
</dbReference>
<dbReference type="InterPro" id="IPR005248">
    <property type="entry name" value="NadD/NMNAT"/>
</dbReference>
<dbReference type="InterPro" id="IPR014729">
    <property type="entry name" value="Rossmann-like_a/b/a_fold"/>
</dbReference>
<dbReference type="NCBIfam" id="TIGR00125">
    <property type="entry name" value="cyt_tran_rel"/>
    <property type="match status" value="1"/>
</dbReference>
<dbReference type="NCBIfam" id="TIGR00482">
    <property type="entry name" value="nicotinate (nicotinamide) nucleotide adenylyltransferase"/>
    <property type="match status" value="1"/>
</dbReference>
<dbReference type="NCBIfam" id="NF000840">
    <property type="entry name" value="PRK00071.1-3"/>
    <property type="match status" value="1"/>
</dbReference>
<dbReference type="PANTHER" id="PTHR39321">
    <property type="entry name" value="NICOTINATE-NUCLEOTIDE ADENYLYLTRANSFERASE-RELATED"/>
    <property type="match status" value="1"/>
</dbReference>
<dbReference type="PANTHER" id="PTHR39321:SF3">
    <property type="entry name" value="PHOSPHOPANTETHEINE ADENYLYLTRANSFERASE"/>
    <property type="match status" value="1"/>
</dbReference>
<dbReference type="Pfam" id="PF01467">
    <property type="entry name" value="CTP_transf_like"/>
    <property type="match status" value="1"/>
</dbReference>
<dbReference type="SUPFAM" id="SSF52374">
    <property type="entry name" value="Nucleotidylyl transferase"/>
    <property type="match status" value="1"/>
</dbReference>